<organism>
    <name type="scientific">Enterobacter agglomerans</name>
    <name type="common">Erwinia herbicola</name>
    <name type="synonym">Pantoea agglomerans</name>
    <dbReference type="NCBI Taxonomy" id="549"/>
    <lineage>
        <taxon>Bacteria</taxon>
        <taxon>Pseudomonadati</taxon>
        <taxon>Pseudomonadota</taxon>
        <taxon>Gammaproteobacteria</taxon>
        <taxon>Enterobacterales</taxon>
        <taxon>Erwiniaceae</taxon>
        <taxon>Pantoea</taxon>
        <taxon>Pantoea agglomerans group</taxon>
    </lineage>
</organism>
<accession>P16239</accession>
<feature type="chain" id="PRO_0000204020" description="Ice nucleation protein">
    <location>
        <begin position="1"/>
        <end position="1258"/>
    </location>
</feature>
<feature type="region of interest" description="Octapeptide periodicity">
    <location>
        <begin position="162"/>
        <end position="1217"/>
    </location>
</feature>
<feature type="region of interest" description="Disordered" evidence="1">
    <location>
        <begin position="260"/>
        <end position="287"/>
    </location>
</feature>
<feature type="region of interest" description="Disordered" evidence="1">
    <location>
        <begin position="311"/>
        <end position="342"/>
    </location>
</feature>
<feature type="region of interest" description="Disordered" evidence="1">
    <location>
        <begin position="356"/>
        <end position="383"/>
    </location>
</feature>
<feature type="region of interest" description="Disordered" evidence="1">
    <location>
        <begin position="407"/>
        <end position="438"/>
    </location>
</feature>
<feature type="region of interest" description="Disordered" evidence="1">
    <location>
        <begin position="452"/>
        <end position="480"/>
    </location>
</feature>
<feature type="compositionally biased region" description="Polar residues" evidence="1">
    <location>
        <begin position="261"/>
        <end position="286"/>
    </location>
</feature>
<feature type="compositionally biased region" description="Polar residues" evidence="1">
    <location>
        <begin position="311"/>
        <end position="334"/>
    </location>
</feature>
<feature type="compositionally biased region" description="Polar residues" evidence="1">
    <location>
        <begin position="357"/>
        <end position="382"/>
    </location>
</feature>
<feature type="compositionally biased region" description="Polar residues" evidence="1">
    <location>
        <begin position="407"/>
        <end position="430"/>
    </location>
</feature>
<feature type="compositionally biased region" description="Polar residues" evidence="1">
    <location>
        <begin position="453"/>
        <end position="480"/>
    </location>
</feature>
<evidence type="ECO:0000256" key="1">
    <source>
        <dbReference type="SAM" id="MobiDB-lite"/>
    </source>
</evidence>
<evidence type="ECO:0000305" key="2"/>
<name>ICEN_ENTAG</name>
<keyword id="KW-0998">Cell outer membrane</keyword>
<keyword id="KW-0387">Ice nucleation</keyword>
<keyword id="KW-0472">Membrane</keyword>
<keyword id="KW-0677">Repeat</keyword>
<dbReference type="EMBL" id="M26382">
    <property type="protein sequence ID" value="AAA24823.1"/>
    <property type="molecule type" value="Genomic_DNA"/>
</dbReference>
<dbReference type="PIR" id="JQ0188">
    <property type="entry name" value="JQ0188"/>
</dbReference>
<dbReference type="GO" id="GO:0009279">
    <property type="term" value="C:cell outer membrane"/>
    <property type="evidence" value="ECO:0007669"/>
    <property type="project" value="UniProtKB-SubCell"/>
</dbReference>
<dbReference type="GO" id="GO:0050825">
    <property type="term" value="F:ice binding"/>
    <property type="evidence" value="ECO:0007669"/>
    <property type="project" value="UniProtKB-KW"/>
</dbReference>
<dbReference type="InterPro" id="IPR000258">
    <property type="entry name" value="Ice_nucleatn"/>
</dbReference>
<dbReference type="PANTHER" id="PTHR31294">
    <property type="match status" value="1"/>
</dbReference>
<dbReference type="PANTHER" id="PTHR31294:SF8">
    <property type="entry name" value="KERATIN-ASSOCIATED PROTEIN 21-1-RELATED"/>
    <property type="match status" value="1"/>
</dbReference>
<dbReference type="Pfam" id="PF00818">
    <property type="entry name" value="Ice_nucleation"/>
    <property type="match status" value="39"/>
</dbReference>
<dbReference type="PRINTS" id="PR00327">
    <property type="entry name" value="ICENUCLEATN"/>
</dbReference>
<dbReference type="SUPFAM" id="SSF69349">
    <property type="entry name" value="Phage fibre proteins"/>
    <property type="match status" value="10"/>
</dbReference>
<dbReference type="PROSITE" id="PS00314">
    <property type="entry name" value="ICE_NUCLEATION"/>
    <property type="match status" value="45"/>
</dbReference>
<protein>
    <recommendedName>
        <fullName>Ice nucleation protein</fullName>
    </recommendedName>
</protein>
<proteinExistence type="inferred from homology"/>
<comment type="function">
    <text>Ice nucleation proteins enable bacteria to nucleate crystallization in supercooled water.</text>
</comment>
<comment type="subcellular location">
    <subcellularLocation>
        <location>Cell outer membrane</location>
    </subcellularLocation>
</comment>
<comment type="domain">
    <text>Contains 126 imperfect repeats of a consensus octapeptide A-G-Y-G-S-T-X-T; further on a 16-residue and a regional 48-residue periodicity is superimposed.</text>
</comment>
<comment type="miscellaneous">
    <text>A structural model is suggested in which the ice nucleation protein displays a symmetry related to that of ice.</text>
</comment>
<comment type="similarity">
    <text evidence="2">Belongs to the bacterial ice nucleation protein family.</text>
</comment>
<sequence length="1258" mass="125085">MKEDKVLILRTCANNMADHGGIIWPLSGIVECKYWKPVKGFENGLTGLIWGKGSDSPLSLHADARWVVAEVDADECIAIETHGWIKFPRAEVLHVGTKTSAMQFILHHRADYVACTEMQAGPGSPDVTSEVKVGNRSLPVTDDIDATIESGSTQPTQTIEIATYGSTLSGTHQSQLIAGYGSTETAGDSSTLIAGYGSTGTAGADSTLVAGYGSTQTAGEESSQMAGYGSTQTGMKGSDLTAGYGSTGTAGDDSSLIAGYGSTQTAGEDSSLTAGYGSTQTAQKGSDLTAGYGSTGTAGADSSLIAGYGSTQTAGEESTQTAGYGSTQTAQKGSDLTAGYGSTGTAGDDSSLIAGYGSTQTAGEDSSLTAGYGSTQTAQKGSDLTAGYGSTGTAGADSSLIAGYGSTQTAGEESTQTAGYGSTQTAQKGSDLTAGYGSTGTAGDDSSLIAGYGSTQTAGEDSSLTAGYGSTQTAQKGSDLTAGYGSTSTAGYESSLIAGYGSTQTAGYGSTLTAGYGSTQTAQNESDLITGYGSTSTAGANSSLIAGYGSTQTASYNSVLTAGYGSTQTAREGSDLTAGYGSTGTAGSDSSIIAGYGSTQTASYHSSLTAGYGSTQTAREQSVLTTGYGSTSTAGADSSLIAGYGSTQTAGYNSILTAGYGSTQTAQEGSDLTAGYGSTSTAGADSSLIAGYGSTQTAGYNSILTAGYGSTQTAQEGSDLTSGYGSTSTAGADSSLIAGYGSTQTASYHSSLTAGYGSTQTAREQSVLTTGYGSTSTAGADSSLIAGYGSTQTAGYHSILTAGYGSTQTAQERSDLTTGYGSTSTAGADSSLIAGYGSTQTAGYNSILTAGYGSTQTAQENSDLTTGYGSTSTAGYDSSLIAGYGSTQTAGYNSILTAGYGSTQTAQENSDLTTGYGSTSTAGYESSLIAGYGSTQTASFKSTLMAGYGSSQTAREQSSLTAGYGSTSMAGYDSSLIAGYGSTQTAGYQSTLTAGYGSTQTAEHSSTLTAGYGSTATAGADSSLIAGYGSSLTSGIRSFLTAGYGSTLISGLRSVLTAGYGSSLISGRRSSLTAGYGSNQIASHRSSLIAGPESTQITGNRSMLIAGKGSSQTAGYRSTLISGADSVQMAGERGKLIAGADSTQTAGDRSKLLAGNNSYLTAGDRSKLTAGNDCILMAGDRSKLTAGINSILTAGCRSKLIGSNGSTLTAGENSVLIFRCWDGKRYTNVVAKTGKGGIEADMPYQMDEDNNIVNKPEE</sequence>
<reference key="1">
    <citation type="journal article" date="1989" name="Gene">
        <title>The consensus sequence of ice nucleation proteins from Erwinia herbicola, Pseudomonas fluorescens and Pseudomonas syringae.</title>
        <authorList>
            <person name="Warren G.J."/>
            <person name="Corotto L.V."/>
        </authorList>
    </citation>
    <scope>NUCLEOTIDE SEQUENCE [GENOMIC DNA]</scope>
    <source>
        <strain>M1</strain>
    </source>
</reference>
<reference key="2">
    <citation type="journal article" date="1993" name="Mol. Microbiol.">
        <title>Isolation and characterization of hydroxylamine-induced mutations in the Erwinia herbicola ice nucleation gene that selectively reduce warm temperature ice nucleation activity.</title>
        <authorList>
            <person name="Gurian-Sherman D."/>
            <person name="Lindow S.E."/>
            <person name="Panopoulos N.J."/>
        </authorList>
    </citation>
    <scope>NUCLEOTIDE SEQUENCE [GENOMIC DNA] (WARM ICE NUCLEUS-DEFICIENT MUTANTS)</scope>
</reference>
<gene>
    <name type="primary">iceE</name>
</gene>